<gene>
    <name type="primary">ghrl</name>
</gene>
<reference evidence="8 10" key="1">
    <citation type="journal article" date="2002" name="Endocrinology">
        <title>Goldfish ghrelin: molecular characterization of the complementary deoxyribonucleic acid, partial gene structure and evidence for its stimulatory role in food intake.</title>
        <authorList>
            <person name="Unniappan S."/>
            <person name="Lin X."/>
            <person name="Cervini L."/>
            <person name="Rivier J."/>
            <person name="Kaiya H."/>
            <person name="Kangawa K."/>
            <person name="Peter R.E."/>
        </authorList>
    </citation>
    <scope>NUCLEOTIDE SEQUENCE [GENOMIC DNA / MRNA]</scope>
    <scope>FUNCTION</scope>
    <scope>AMIDATION AT GLN-38 AND MET-45</scope>
    <scope>TISSUE SPECIFICITY</scope>
    <source>
        <tissue evidence="6">Intestine</tissue>
    </source>
</reference>
<dbReference type="EMBL" id="AF454389">
    <property type="protein sequence ID" value="AAN16215.1"/>
    <property type="molecule type" value="mRNA"/>
</dbReference>
<dbReference type="EMBL" id="AF454390">
    <property type="protein sequence ID" value="AAN16216.1"/>
    <property type="molecule type" value="Genomic_DNA"/>
</dbReference>
<dbReference type="Proteomes" id="UP000515129">
    <property type="component" value="Unplaced"/>
</dbReference>
<dbReference type="GO" id="GO:0005576">
    <property type="term" value="C:extracellular region"/>
    <property type="evidence" value="ECO:0007669"/>
    <property type="project" value="UniProtKB-SubCell"/>
</dbReference>
<dbReference type="GO" id="GO:0001664">
    <property type="term" value="F:G protein-coupled receptor binding"/>
    <property type="evidence" value="ECO:0000250"/>
    <property type="project" value="UniProtKB"/>
</dbReference>
<dbReference type="GO" id="GO:0016608">
    <property type="term" value="F:growth hormone-releasing hormone activity"/>
    <property type="evidence" value="ECO:0000250"/>
    <property type="project" value="UniProtKB"/>
</dbReference>
<dbReference type="GO" id="GO:0007186">
    <property type="term" value="P:G protein-coupled receptor signaling pathway"/>
    <property type="evidence" value="ECO:0000250"/>
    <property type="project" value="UniProtKB"/>
</dbReference>
<dbReference type="GO" id="GO:0030252">
    <property type="term" value="P:growth hormone secretion"/>
    <property type="evidence" value="ECO:0000250"/>
    <property type="project" value="UniProtKB"/>
</dbReference>
<dbReference type="InterPro" id="IPR006737">
    <property type="entry name" value="Motilin_assoc"/>
</dbReference>
<dbReference type="InterPro" id="IPR005441">
    <property type="entry name" value="Preproghrelin"/>
</dbReference>
<dbReference type="PANTHER" id="PTHR14122:SF1">
    <property type="entry name" value="APPETITE-REGULATING HORMONE"/>
    <property type="match status" value="1"/>
</dbReference>
<dbReference type="PANTHER" id="PTHR14122">
    <property type="entry name" value="GHRELIN PRECURSOR"/>
    <property type="match status" value="1"/>
</dbReference>
<dbReference type="Pfam" id="PF04643">
    <property type="entry name" value="Motilin_assoc"/>
    <property type="match status" value="1"/>
</dbReference>
<keyword id="KW-0027">Amidation</keyword>
<keyword id="KW-0165">Cleavage on pair of basic residues</keyword>
<keyword id="KW-0372">Hormone</keyword>
<keyword id="KW-0449">Lipoprotein</keyword>
<keyword id="KW-1185">Reference proteome</keyword>
<keyword id="KW-0964">Secreted</keyword>
<keyword id="KW-0732">Signal</keyword>
<feature type="signal peptide" evidence="4">
    <location>
        <begin position="1"/>
        <end position="26"/>
    </location>
</feature>
<feature type="peptide" id="PRO_0000019213" description="Ghrelin-19" evidence="7">
    <location>
        <begin position="27"/>
        <end position="45"/>
    </location>
</feature>
<feature type="peptide" id="PRO_0000019214" description="Ghrelin-12" evidence="7">
    <location>
        <begin position="27"/>
        <end position="38"/>
    </location>
</feature>
<feature type="propeptide" id="PRO_0000019215" description="Removed in mature form" evidence="7">
    <location>
        <begin position="49"/>
        <end position="103"/>
    </location>
</feature>
<feature type="region of interest" description="Disordered" evidence="5">
    <location>
        <begin position="27"/>
        <end position="51"/>
    </location>
</feature>
<feature type="modified residue" description="Glutamine amide" evidence="9">
    <location>
        <position position="38"/>
    </location>
</feature>
<feature type="modified residue" description="Methionine amide" evidence="9">
    <location>
        <position position="45"/>
    </location>
</feature>
<feature type="lipid moiety-binding region" description="O-decanoyl serine; alternate" evidence="3">
    <location>
        <position position="29"/>
    </location>
</feature>
<feature type="lipid moiety-binding region" description="O-hexanoyl serine; alternate" evidence="3">
    <location>
        <position position="29"/>
    </location>
</feature>
<feature type="lipid moiety-binding region" description="O-octanoyl serine; alternate" evidence="3">
    <location>
        <position position="29"/>
    </location>
</feature>
<comment type="function">
    <text evidence="1 6">Ligand for growth hormone secretagogue receptor type 1 (GHSR). Induces the release of growth hormone from the pituitary. Induces adiposity and stimulates gastric acid secretion. Involved in growth regulation (By similarity). Has an appetite-stimulating effect.</text>
</comment>
<comment type="subcellular location">
    <subcellularLocation>
        <location evidence="2">Secreted</location>
    </subcellularLocation>
</comment>
<comment type="tissue specificity">
    <text evidence="6">Expressed in the telencephalon, hypothalamus, pituitary, intestine, liver, spleen and gill, with expression strongest in the intestine.</text>
</comment>
<comment type="PTM">
    <text evidence="1 3">O-octanoylated by GOAT/MBOAT4 (By similarity). O-octanoylation or O-decanoylation is essential for activity. The O-decanoylated form differs in the length of the carbon backbone of the carboxylic acid forming an ester bond with Ser-29 (By similarity).</text>
</comment>
<comment type="similarity">
    <text evidence="4">Belongs to the motilin family.</text>
</comment>
<proteinExistence type="evidence at protein level"/>
<name>GHRL_CARAU</name>
<evidence type="ECO:0000250" key="1"/>
<evidence type="ECO:0000250" key="2">
    <source>
        <dbReference type="UniProtKB" id="Q8JFY4"/>
    </source>
</evidence>
<evidence type="ECO:0000250" key="3">
    <source>
        <dbReference type="UniProtKB" id="Q9EQX0"/>
    </source>
</evidence>
<evidence type="ECO:0000255" key="4"/>
<evidence type="ECO:0000256" key="5">
    <source>
        <dbReference type="SAM" id="MobiDB-lite"/>
    </source>
</evidence>
<evidence type="ECO:0000269" key="6">
    <source>
    </source>
</evidence>
<evidence type="ECO:0000303" key="7">
    <source>
    </source>
</evidence>
<evidence type="ECO:0000305" key="8"/>
<evidence type="ECO:0000305" key="9">
    <source>
    </source>
</evidence>
<evidence type="ECO:0000312" key="10">
    <source>
        <dbReference type="EMBL" id="AAN16215.1"/>
    </source>
</evidence>
<protein>
    <recommendedName>
        <fullName>Ghrelin</fullName>
    </recommendedName>
    <component>
        <recommendedName>
            <fullName>Ghrelin-12</fullName>
        </recommendedName>
    </component>
    <component>
        <recommendedName>
            <fullName>Ghrelin-19</fullName>
        </recommendedName>
    </component>
</protein>
<sequence length="103" mass="11520">MPLRRRASHMFVLLCALSLCVESVKGGTSFLSPAQKPQGRRPPRMGRRDVAEPEIPVIKEDDQFMMSAPFELSVSLSEAEYEKYGPVLQKVLVNLLGDSPLEF</sequence>
<organism>
    <name type="scientific">Carassius auratus</name>
    <name type="common">Goldfish</name>
    <dbReference type="NCBI Taxonomy" id="7957"/>
    <lineage>
        <taxon>Eukaryota</taxon>
        <taxon>Metazoa</taxon>
        <taxon>Chordata</taxon>
        <taxon>Craniata</taxon>
        <taxon>Vertebrata</taxon>
        <taxon>Euteleostomi</taxon>
        <taxon>Actinopterygii</taxon>
        <taxon>Neopterygii</taxon>
        <taxon>Teleostei</taxon>
        <taxon>Ostariophysi</taxon>
        <taxon>Cypriniformes</taxon>
        <taxon>Cyprinidae</taxon>
        <taxon>Cyprininae</taxon>
        <taxon>Carassius</taxon>
    </lineage>
</organism>
<accession>Q8AUU1</accession>